<gene>
    <name evidence="7" type="ordered locus">At1g30740</name>
    <name evidence="8" type="ORF">T5I8.19</name>
</gene>
<dbReference type="EC" id="1.1.1.-" evidence="1"/>
<dbReference type="EMBL" id="AC007060">
    <property type="protein sequence ID" value="AAD25761.1"/>
    <property type="molecule type" value="Genomic_DNA"/>
</dbReference>
<dbReference type="EMBL" id="CP002684">
    <property type="protein sequence ID" value="AEE31266.1"/>
    <property type="molecule type" value="Genomic_DNA"/>
</dbReference>
<dbReference type="EMBL" id="DQ446310">
    <property type="protein sequence ID" value="ABE65674.1"/>
    <property type="molecule type" value="mRNA"/>
</dbReference>
<dbReference type="EMBL" id="DQ652872">
    <property type="protein sequence ID" value="ABK28425.1"/>
    <property type="status" value="ALT_SEQ"/>
    <property type="molecule type" value="mRNA"/>
</dbReference>
<dbReference type="PIR" id="A86433">
    <property type="entry name" value="A86433"/>
</dbReference>
<dbReference type="RefSeq" id="NP_174361.1">
    <property type="nucleotide sequence ID" value="NM_102810.2"/>
</dbReference>
<dbReference type="SMR" id="Q9SA89"/>
<dbReference type="FunCoup" id="Q9SA89">
    <property type="interactions" value="2"/>
</dbReference>
<dbReference type="STRING" id="3702.Q9SA89"/>
<dbReference type="GlyGen" id="Q9SA89">
    <property type="glycosylation" value="7 sites"/>
</dbReference>
<dbReference type="iPTMnet" id="Q9SA89"/>
<dbReference type="PaxDb" id="3702-AT1G30740.1"/>
<dbReference type="ProteomicsDB" id="240774"/>
<dbReference type="EnsemblPlants" id="AT1G30740.1">
    <property type="protein sequence ID" value="AT1G30740.1"/>
    <property type="gene ID" value="AT1G30740"/>
</dbReference>
<dbReference type="GeneID" id="839954"/>
<dbReference type="Gramene" id="AT1G30740.1">
    <property type="protein sequence ID" value="AT1G30740.1"/>
    <property type="gene ID" value="AT1G30740"/>
</dbReference>
<dbReference type="KEGG" id="ath:AT1G30740"/>
<dbReference type="Araport" id="AT1G30740"/>
<dbReference type="TAIR" id="AT1G30740">
    <property type="gene designation" value="ATBBE12"/>
</dbReference>
<dbReference type="eggNOG" id="ENOG502QVGN">
    <property type="taxonomic scope" value="Eukaryota"/>
</dbReference>
<dbReference type="HOGENOM" id="CLU_018354_6_0_1"/>
<dbReference type="InParanoid" id="Q9SA89"/>
<dbReference type="OMA" id="LFYRIWE"/>
<dbReference type="OrthoDB" id="407275at2759"/>
<dbReference type="PhylomeDB" id="Q9SA89"/>
<dbReference type="PRO" id="PR:Q9SA89"/>
<dbReference type="Proteomes" id="UP000006548">
    <property type="component" value="Chromosome 1"/>
</dbReference>
<dbReference type="ExpressionAtlas" id="Q9SA89">
    <property type="expression patterns" value="baseline and differential"/>
</dbReference>
<dbReference type="GO" id="GO:0005576">
    <property type="term" value="C:extracellular region"/>
    <property type="evidence" value="ECO:0007669"/>
    <property type="project" value="UniProtKB-KW"/>
</dbReference>
<dbReference type="GO" id="GO:0009505">
    <property type="term" value="C:plant-type cell wall"/>
    <property type="evidence" value="ECO:0000250"/>
    <property type="project" value="UniProtKB"/>
</dbReference>
<dbReference type="GO" id="GO:0009506">
    <property type="term" value="C:plasmodesma"/>
    <property type="evidence" value="ECO:0007005"/>
    <property type="project" value="TAIR"/>
</dbReference>
<dbReference type="GO" id="GO:0005773">
    <property type="term" value="C:vacuole"/>
    <property type="evidence" value="ECO:0000314"/>
    <property type="project" value="TAIR"/>
</dbReference>
<dbReference type="GO" id="GO:0071949">
    <property type="term" value="F:FAD binding"/>
    <property type="evidence" value="ECO:0007669"/>
    <property type="project" value="InterPro"/>
</dbReference>
<dbReference type="GO" id="GO:0016491">
    <property type="term" value="F:oxidoreductase activity"/>
    <property type="evidence" value="ECO:0007669"/>
    <property type="project" value="UniProtKB-KW"/>
</dbReference>
<dbReference type="FunFam" id="3.30.43.10:FF:000004">
    <property type="entry name" value="Berberine bridge enzyme-like 15"/>
    <property type="match status" value="1"/>
</dbReference>
<dbReference type="Gene3D" id="3.30.465.10">
    <property type="match status" value="1"/>
</dbReference>
<dbReference type="Gene3D" id="3.40.462.20">
    <property type="match status" value="1"/>
</dbReference>
<dbReference type="Gene3D" id="3.30.43.10">
    <property type="entry name" value="Uridine Diphospho-n-acetylenolpyruvylglucosamine Reductase, domain 2"/>
    <property type="match status" value="1"/>
</dbReference>
<dbReference type="InterPro" id="IPR012951">
    <property type="entry name" value="BBE"/>
</dbReference>
<dbReference type="InterPro" id="IPR016166">
    <property type="entry name" value="FAD-bd_PCMH"/>
</dbReference>
<dbReference type="InterPro" id="IPR036318">
    <property type="entry name" value="FAD-bd_PCMH-like_sf"/>
</dbReference>
<dbReference type="InterPro" id="IPR016167">
    <property type="entry name" value="FAD-bd_PCMH_sub1"/>
</dbReference>
<dbReference type="InterPro" id="IPR016169">
    <property type="entry name" value="FAD-bd_PCMH_sub2"/>
</dbReference>
<dbReference type="InterPro" id="IPR006094">
    <property type="entry name" value="Oxid_FAD_bind_N"/>
</dbReference>
<dbReference type="PANTHER" id="PTHR32448">
    <property type="entry name" value="OS08G0158400 PROTEIN"/>
    <property type="match status" value="1"/>
</dbReference>
<dbReference type="Pfam" id="PF08031">
    <property type="entry name" value="BBE"/>
    <property type="match status" value="1"/>
</dbReference>
<dbReference type="Pfam" id="PF01565">
    <property type="entry name" value="FAD_binding_4"/>
    <property type="match status" value="1"/>
</dbReference>
<dbReference type="SUPFAM" id="SSF56176">
    <property type="entry name" value="FAD-binding/transporter-associated domain-like"/>
    <property type="match status" value="1"/>
</dbReference>
<dbReference type="PROSITE" id="PS51387">
    <property type="entry name" value="FAD_PCMH"/>
    <property type="match status" value="1"/>
</dbReference>
<protein>
    <recommendedName>
        <fullName evidence="5">Berberine bridge enzyme-like 12</fullName>
        <shortName evidence="5">AtBBE-like 12</shortName>
        <ecNumber evidence="1">1.1.1.-</ecNumber>
    </recommendedName>
</protein>
<accession>Q9SA89</accession>
<accession>A0MEA3</accession>
<keyword id="KW-0134">Cell wall</keyword>
<keyword id="KW-1015">Disulfide bond</keyword>
<keyword id="KW-0274">FAD</keyword>
<keyword id="KW-0285">Flavoprotein</keyword>
<keyword id="KW-0325">Glycoprotein</keyword>
<keyword id="KW-0547">Nucleotide-binding</keyword>
<keyword id="KW-0560">Oxidoreductase</keyword>
<keyword id="KW-1185">Reference proteome</keyword>
<keyword id="KW-0964">Secreted</keyword>
<keyword id="KW-0732">Signal</keyword>
<feature type="signal peptide" evidence="2">
    <location>
        <begin position="1"/>
        <end position="20"/>
    </location>
</feature>
<feature type="chain" id="PRO_5008180360" description="Berberine bridge enzyme-like 12">
    <location>
        <begin position="21"/>
        <end position="533"/>
    </location>
</feature>
<feature type="domain" description="FAD-binding PCMH-type" evidence="4">
    <location>
        <begin position="73"/>
        <end position="249"/>
    </location>
</feature>
<feature type="glycosylation site" description="N-linked (GlcNAc...) asparagine" evidence="3">
    <location>
        <position position="35"/>
    </location>
</feature>
<feature type="glycosylation site" description="N-linked (GlcNAc...) asparagine" evidence="3">
    <location>
        <position position="70"/>
    </location>
</feature>
<feature type="glycosylation site" description="N-linked (GlcNAc...) asparagine" evidence="3">
    <location>
        <position position="133"/>
    </location>
</feature>
<feature type="glycosylation site" description="N-linked (GlcNAc...) asparagine" evidence="3">
    <location>
        <position position="296"/>
    </location>
</feature>
<feature type="glycosylation site" description="N-linked (GlcNAc...) asparagine" evidence="3">
    <location>
        <position position="412"/>
    </location>
</feature>
<feature type="glycosylation site" description="N-linked (GlcNAc...) asparagine" evidence="3">
    <location>
        <position position="417"/>
    </location>
</feature>
<feature type="disulfide bond" evidence="1">
    <location>
        <begin position="32"/>
        <end position="95"/>
    </location>
</feature>
<feature type="cross-link" description="6-(S-cysteinyl)-8alpha-(pros-histidyl)-FAD (His-Cys)" evidence="1">
    <location>
        <begin position="110"/>
        <end position="174"/>
    </location>
</feature>
<sequence length="533" mass="59870">MYLIFLLFFAASYSMSLSSADSVTIYEDFVQCFKNVTTISDIDLSDVVLPRTSISFTPTLRAYIRNARFNTSSMPKPSIIIVPRVDSHVQAAVICAKTLNLQLKIRSGGHDYDGLSYVSAVTFLVLDLSNFRNITVDLNDGGGSAWVQTGATLGELYYRIWEKSEVHAFPAGVCPTVGVGGHVSGGGYGHMIRKFGLTIDHVVDATIVDANGQIHDRKSMEEDLFWAIRGGGGGSFGVVLAFKVKLVTVPKTVTVFRVDKSVDENALDMVYKWQFVAPRTDPGLFMRVLLSSPTQNKTSTVNTKLRALYLGKADDVVLKMAEEFPELGLKKEDCKEMTWIQSLLWWMNHVDVDKVKPEILLEREPDSAKFLKRKSDYVEKEMTKPELNRLFQKLATLDRTGLVLNPYGGSLNVTAVNATAFPHRHKLYKIQHSVTWPDAGPEAERLYIGNLRTTYNIMTPFVSKNPRSSYLNYRDIDIGVNDHGADGYRKGEIYGRKYFGENFDRLVRVKTAVDPDNFFRNEQSIPTLPPNRR</sequence>
<name>BBE12_ARATH</name>
<proteinExistence type="evidence at transcript level"/>
<organism>
    <name type="scientific">Arabidopsis thaliana</name>
    <name type="common">Mouse-ear cress</name>
    <dbReference type="NCBI Taxonomy" id="3702"/>
    <lineage>
        <taxon>Eukaryota</taxon>
        <taxon>Viridiplantae</taxon>
        <taxon>Streptophyta</taxon>
        <taxon>Embryophyta</taxon>
        <taxon>Tracheophyta</taxon>
        <taxon>Spermatophyta</taxon>
        <taxon>Magnoliopsida</taxon>
        <taxon>eudicotyledons</taxon>
        <taxon>Gunneridae</taxon>
        <taxon>Pentapetalae</taxon>
        <taxon>rosids</taxon>
        <taxon>malvids</taxon>
        <taxon>Brassicales</taxon>
        <taxon>Brassicaceae</taxon>
        <taxon>Camelineae</taxon>
        <taxon>Arabidopsis</taxon>
    </lineage>
</organism>
<evidence type="ECO:0000250" key="1">
    <source>
        <dbReference type="UniProtKB" id="O64743"/>
    </source>
</evidence>
<evidence type="ECO:0000255" key="2"/>
<evidence type="ECO:0000255" key="3">
    <source>
        <dbReference type="PROSITE-ProRule" id="PRU00498"/>
    </source>
</evidence>
<evidence type="ECO:0000255" key="4">
    <source>
        <dbReference type="PROSITE-ProRule" id="PRU00718"/>
    </source>
</evidence>
<evidence type="ECO:0000303" key="5">
    <source>
    </source>
</evidence>
<evidence type="ECO:0000305" key="6"/>
<evidence type="ECO:0000312" key="7">
    <source>
        <dbReference type="Araport" id="AT1G30740"/>
    </source>
</evidence>
<evidence type="ECO:0000312" key="8">
    <source>
        <dbReference type="EMBL" id="AAD25761.1"/>
    </source>
</evidence>
<comment type="cofactor">
    <cofactor evidence="1">
        <name>FAD</name>
        <dbReference type="ChEBI" id="CHEBI:57692"/>
    </cofactor>
    <text evidence="1">Binds 1 FAD per subunit in a bicovalent manner.</text>
</comment>
<comment type="subcellular location">
    <subcellularLocation>
        <location evidence="1">Secreted</location>
        <location evidence="1">Cell wall</location>
    </subcellularLocation>
</comment>
<comment type="PTM">
    <text evidence="1">The FAD cofactor is bound via a bicovalent 6-S-cysteinyl, 8alpha-N1-histidyl FAD linkage.</text>
</comment>
<comment type="similarity">
    <text evidence="6">Belongs to the oxygen-dependent FAD-linked oxidoreductase family.</text>
</comment>
<comment type="sequence caution" evidence="6">
    <conflict type="erroneous termination">
        <sequence resource="EMBL-CDS" id="ABK28425"/>
    </conflict>
    <text>Extended C-terminus.</text>
</comment>
<reference key="1">
    <citation type="journal article" date="2000" name="Nature">
        <title>Sequence and analysis of chromosome 1 of the plant Arabidopsis thaliana.</title>
        <authorList>
            <person name="Theologis A."/>
            <person name="Ecker J.R."/>
            <person name="Palm C.J."/>
            <person name="Federspiel N.A."/>
            <person name="Kaul S."/>
            <person name="White O."/>
            <person name="Alonso J."/>
            <person name="Altafi H."/>
            <person name="Araujo R."/>
            <person name="Bowman C.L."/>
            <person name="Brooks S.Y."/>
            <person name="Buehler E."/>
            <person name="Chan A."/>
            <person name="Chao Q."/>
            <person name="Chen H."/>
            <person name="Cheuk R.F."/>
            <person name="Chin C.W."/>
            <person name="Chung M.K."/>
            <person name="Conn L."/>
            <person name="Conway A.B."/>
            <person name="Conway A.R."/>
            <person name="Creasy T.H."/>
            <person name="Dewar K."/>
            <person name="Dunn P."/>
            <person name="Etgu P."/>
            <person name="Feldblyum T.V."/>
            <person name="Feng J.-D."/>
            <person name="Fong B."/>
            <person name="Fujii C.Y."/>
            <person name="Gill J.E."/>
            <person name="Goldsmith A.D."/>
            <person name="Haas B."/>
            <person name="Hansen N.F."/>
            <person name="Hughes B."/>
            <person name="Huizar L."/>
            <person name="Hunter J.L."/>
            <person name="Jenkins J."/>
            <person name="Johnson-Hopson C."/>
            <person name="Khan S."/>
            <person name="Khaykin E."/>
            <person name="Kim C.J."/>
            <person name="Koo H.L."/>
            <person name="Kremenetskaia I."/>
            <person name="Kurtz D.B."/>
            <person name="Kwan A."/>
            <person name="Lam B."/>
            <person name="Langin-Hooper S."/>
            <person name="Lee A."/>
            <person name="Lee J.M."/>
            <person name="Lenz C.A."/>
            <person name="Li J.H."/>
            <person name="Li Y.-P."/>
            <person name="Lin X."/>
            <person name="Liu S.X."/>
            <person name="Liu Z.A."/>
            <person name="Luros J.S."/>
            <person name="Maiti R."/>
            <person name="Marziali A."/>
            <person name="Militscher J."/>
            <person name="Miranda M."/>
            <person name="Nguyen M."/>
            <person name="Nierman W.C."/>
            <person name="Osborne B.I."/>
            <person name="Pai G."/>
            <person name="Peterson J."/>
            <person name="Pham P.K."/>
            <person name="Rizzo M."/>
            <person name="Rooney T."/>
            <person name="Rowley D."/>
            <person name="Sakano H."/>
            <person name="Salzberg S.L."/>
            <person name="Schwartz J.R."/>
            <person name="Shinn P."/>
            <person name="Southwick A.M."/>
            <person name="Sun H."/>
            <person name="Tallon L.J."/>
            <person name="Tambunga G."/>
            <person name="Toriumi M.J."/>
            <person name="Town C.D."/>
            <person name="Utterback T."/>
            <person name="Van Aken S."/>
            <person name="Vaysberg M."/>
            <person name="Vysotskaia V.S."/>
            <person name="Walker M."/>
            <person name="Wu D."/>
            <person name="Yu G."/>
            <person name="Fraser C.M."/>
            <person name="Venter J.C."/>
            <person name="Davis R.W."/>
        </authorList>
    </citation>
    <scope>NUCLEOTIDE SEQUENCE [LARGE SCALE GENOMIC DNA]</scope>
    <source>
        <strain>cv. Columbia</strain>
    </source>
</reference>
<reference key="2">
    <citation type="journal article" date="2017" name="Plant J.">
        <title>Araport11: a complete reannotation of the Arabidopsis thaliana reference genome.</title>
        <authorList>
            <person name="Cheng C.Y."/>
            <person name="Krishnakumar V."/>
            <person name="Chan A.P."/>
            <person name="Thibaud-Nissen F."/>
            <person name="Schobel S."/>
            <person name="Town C.D."/>
        </authorList>
    </citation>
    <scope>GENOME REANNOTATION</scope>
    <source>
        <strain>cv. Columbia</strain>
    </source>
</reference>
<reference key="3">
    <citation type="journal article" date="2006" name="Plant Biotechnol. J.">
        <title>Simultaneous high-throughput recombinational cloning of open reading frames in closed and open configurations.</title>
        <authorList>
            <person name="Underwood B.A."/>
            <person name="Vanderhaeghen R."/>
            <person name="Whitford R."/>
            <person name="Town C.D."/>
            <person name="Hilson P."/>
        </authorList>
    </citation>
    <scope>NUCLEOTIDE SEQUENCE [LARGE SCALE MRNA]</scope>
    <source>
        <strain>cv. Columbia</strain>
    </source>
</reference>
<reference key="4">
    <citation type="journal article" date="2015" name="J. Biol. Chem.">
        <title>Oxidation of monolignols by members of the berberine bridge enzyme family suggests a role in plant cell wall metabolism.</title>
        <authorList>
            <person name="Daniel B."/>
            <person name="Pavkov-Keller T."/>
            <person name="Steiner B."/>
            <person name="Dordic A."/>
            <person name="Gutmann A."/>
            <person name="Nidetzky B."/>
            <person name="Sensen C.W."/>
            <person name="van der Graaff E."/>
            <person name="Wallner S."/>
            <person name="Gruber K."/>
            <person name="Macheroux P."/>
        </authorList>
    </citation>
    <scope>GENE FAMILY</scope>
    <scope>NOMENCLATURE</scope>
</reference>